<keyword id="KW-0004">4Fe-4S</keyword>
<keyword id="KW-0963">Cytoplasm</keyword>
<keyword id="KW-0408">Iron</keyword>
<keyword id="KW-0411">Iron-sulfur</keyword>
<keyword id="KW-0479">Metal-binding</keyword>
<keyword id="KW-0949">S-adenosyl-L-methionine</keyword>
<keyword id="KW-0808">Transferase</keyword>
<gene>
    <name evidence="1" type="primary">lipA</name>
    <name type="ordered locus">BQ04950</name>
</gene>
<reference key="1">
    <citation type="journal article" date="2004" name="Proc. Natl. Acad. Sci. U.S.A.">
        <title>The louse-borne human pathogen Bartonella quintana is a genomic derivative of the zoonotic agent Bartonella henselae.</title>
        <authorList>
            <person name="Alsmark U.C.M."/>
            <person name="Frank A.C."/>
            <person name="Karlberg E.O."/>
            <person name="Legault B.-A."/>
            <person name="Ardell D.H."/>
            <person name="Canbaeck B."/>
            <person name="Eriksson A.-S."/>
            <person name="Naeslund A.K."/>
            <person name="Handley S.A."/>
            <person name="Huvet M."/>
            <person name="La Scola B."/>
            <person name="Holmberg M."/>
            <person name="Andersson S.G.E."/>
        </authorList>
    </citation>
    <scope>NUCLEOTIDE SEQUENCE [LARGE SCALE GENOMIC DNA]</scope>
    <source>
        <strain>Toulouse</strain>
    </source>
</reference>
<sequence length="320" mass="36303">MVTVVDRVTSRRLRHPEKMHRPDTSIQKKPDWIRVKAPTSKIYKETYDIVRAHKLVTVCEEAGCPNVGECWSQRHASFMILGEICTRACAFCNVATGIPLAVDDNEPERVADAVAQMELKHVVITSVDRDDLADGGAQHFAKVIYAIRRKAPKTTIEVLTPDFRHKDGALEIVVAAKPDVFNHNLETVPSKYLKVRPGARYFHSIRLLQRVKELDPTIFTKSGIMVGLGEERNEILQLMDDLRSADVDFMTIGQYLQPTRKHHPVIRFFPPEEFESFAKIGKVKGFLHMASNPLTRSSHHAGDDFAILQKARDEKFALQR</sequence>
<dbReference type="EC" id="2.8.1.8" evidence="1"/>
<dbReference type="EMBL" id="BX897700">
    <property type="protein sequence ID" value="CAF25994.1"/>
    <property type="molecule type" value="Genomic_DNA"/>
</dbReference>
<dbReference type="RefSeq" id="WP_011179280.1">
    <property type="nucleotide sequence ID" value="NC_005955.1"/>
</dbReference>
<dbReference type="SMR" id="Q6G166"/>
<dbReference type="KEGG" id="bqu:BQ04950"/>
<dbReference type="eggNOG" id="COG0320">
    <property type="taxonomic scope" value="Bacteria"/>
</dbReference>
<dbReference type="HOGENOM" id="CLU_033144_2_1_5"/>
<dbReference type="OrthoDB" id="9787898at2"/>
<dbReference type="UniPathway" id="UPA00538">
    <property type="reaction ID" value="UER00593"/>
</dbReference>
<dbReference type="Proteomes" id="UP000000597">
    <property type="component" value="Chromosome"/>
</dbReference>
<dbReference type="GO" id="GO:0005737">
    <property type="term" value="C:cytoplasm"/>
    <property type="evidence" value="ECO:0007669"/>
    <property type="project" value="UniProtKB-SubCell"/>
</dbReference>
<dbReference type="GO" id="GO:0051539">
    <property type="term" value="F:4 iron, 4 sulfur cluster binding"/>
    <property type="evidence" value="ECO:0007669"/>
    <property type="project" value="UniProtKB-UniRule"/>
</dbReference>
<dbReference type="GO" id="GO:0016992">
    <property type="term" value="F:lipoate synthase activity"/>
    <property type="evidence" value="ECO:0007669"/>
    <property type="project" value="UniProtKB-UniRule"/>
</dbReference>
<dbReference type="GO" id="GO:0046872">
    <property type="term" value="F:metal ion binding"/>
    <property type="evidence" value="ECO:0007669"/>
    <property type="project" value="UniProtKB-KW"/>
</dbReference>
<dbReference type="CDD" id="cd01335">
    <property type="entry name" value="Radical_SAM"/>
    <property type="match status" value="1"/>
</dbReference>
<dbReference type="FunFam" id="3.20.20.70:FF:000040">
    <property type="entry name" value="Lipoyl synthase"/>
    <property type="match status" value="1"/>
</dbReference>
<dbReference type="Gene3D" id="3.20.20.70">
    <property type="entry name" value="Aldolase class I"/>
    <property type="match status" value="1"/>
</dbReference>
<dbReference type="HAMAP" id="MF_00206">
    <property type="entry name" value="Lipoyl_synth"/>
    <property type="match status" value="1"/>
</dbReference>
<dbReference type="InterPro" id="IPR013785">
    <property type="entry name" value="Aldolase_TIM"/>
</dbReference>
<dbReference type="InterPro" id="IPR006638">
    <property type="entry name" value="Elp3/MiaA/NifB-like_rSAM"/>
</dbReference>
<dbReference type="InterPro" id="IPR003698">
    <property type="entry name" value="Lipoyl_synth"/>
</dbReference>
<dbReference type="InterPro" id="IPR007197">
    <property type="entry name" value="rSAM"/>
</dbReference>
<dbReference type="NCBIfam" id="TIGR00510">
    <property type="entry name" value="lipA"/>
    <property type="match status" value="1"/>
</dbReference>
<dbReference type="NCBIfam" id="NF004019">
    <property type="entry name" value="PRK05481.1"/>
    <property type="match status" value="1"/>
</dbReference>
<dbReference type="NCBIfam" id="NF009544">
    <property type="entry name" value="PRK12928.1"/>
    <property type="match status" value="1"/>
</dbReference>
<dbReference type="PANTHER" id="PTHR10949">
    <property type="entry name" value="LIPOYL SYNTHASE"/>
    <property type="match status" value="1"/>
</dbReference>
<dbReference type="PANTHER" id="PTHR10949:SF0">
    <property type="entry name" value="LIPOYL SYNTHASE, MITOCHONDRIAL"/>
    <property type="match status" value="1"/>
</dbReference>
<dbReference type="Pfam" id="PF04055">
    <property type="entry name" value="Radical_SAM"/>
    <property type="match status" value="1"/>
</dbReference>
<dbReference type="PIRSF" id="PIRSF005963">
    <property type="entry name" value="Lipoyl_synth"/>
    <property type="match status" value="1"/>
</dbReference>
<dbReference type="SFLD" id="SFLDF00271">
    <property type="entry name" value="lipoyl_synthase"/>
    <property type="match status" value="1"/>
</dbReference>
<dbReference type="SFLD" id="SFLDG01058">
    <property type="entry name" value="lipoyl_synthase_like"/>
    <property type="match status" value="1"/>
</dbReference>
<dbReference type="SMART" id="SM00729">
    <property type="entry name" value="Elp3"/>
    <property type="match status" value="1"/>
</dbReference>
<dbReference type="SUPFAM" id="SSF102114">
    <property type="entry name" value="Radical SAM enzymes"/>
    <property type="match status" value="1"/>
</dbReference>
<dbReference type="PROSITE" id="PS51918">
    <property type="entry name" value="RADICAL_SAM"/>
    <property type="match status" value="1"/>
</dbReference>
<accession>Q6G166</accession>
<comment type="function">
    <text evidence="1">Catalyzes the radical-mediated insertion of two sulfur atoms into the C-6 and C-8 positions of the octanoyl moiety bound to the lipoyl domains of lipoate-dependent enzymes, thereby converting the octanoylated domains into lipoylated derivatives.</text>
</comment>
<comment type="catalytic activity">
    <reaction evidence="1">
        <text>[[Fe-S] cluster scaffold protein carrying a second [4Fe-4S](2+) cluster] + N(6)-octanoyl-L-lysyl-[protein] + 2 oxidized [2Fe-2S]-[ferredoxin] + 2 S-adenosyl-L-methionine + 4 H(+) = [[Fe-S] cluster scaffold protein] + N(6)-[(R)-dihydrolipoyl]-L-lysyl-[protein] + 4 Fe(3+) + 2 hydrogen sulfide + 2 5'-deoxyadenosine + 2 L-methionine + 2 reduced [2Fe-2S]-[ferredoxin]</text>
        <dbReference type="Rhea" id="RHEA:16585"/>
        <dbReference type="Rhea" id="RHEA-COMP:9928"/>
        <dbReference type="Rhea" id="RHEA-COMP:10000"/>
        <dbReference type="Rhea" id="RHEA-COMP:10001"/>
        <dbReference type="Rhea" id="RHEA-COMP:10475"/>
        <dbReference type="Rhea" id="RHEA-COMP:14568"/>
        <dbReference type="Rhea" id="RHEA-COMP:14569"/>
        <dbReference type="ChEBI" id="CHEBI:15378"/>
        <dbReference type="ChEBI" id="CHEBI:17319"/>
        <dbReference type="ChEBI" id="CHEBI:29034"/>
        <dbReference type="ChEBI" id="CHEBI:29919"/>
        <dbReference type="ChEBI" id="CHEBI:33722"/>
        <dbReference type="ChEBI" id="CHEBI:33737"/>
        <dbReference type="ChEBI" id="CHEBI:33738"/>
        <dbReference type="ChEBI" id="CHEBI:57844"/>
        <dbReference type="ChEBI" id="CHEBI:59789"/>
        <dbReference type="ChEBI" id="CHEBI:78809"/>
        <dbReference type="ChEBI" id="CHEBI:83100"/>
        <dbReference type="EC" id="2.8.1.8"/>
    </reaction>
</comment>
<comment type="cofactor">
    <cofactor evidence="1">
        <name>[4Fe-4S] cluster</name>
        <dbReference type="ChEBI" id="CHEBI:49883"/>
    </cofactor>
    <text evidence="1">Binds 2 [4Fe-4S] clusters per subunit. One cluster is coordinated with 3 cysteines and an exchangeable S-adenosyl-L-methionine.</text>
</comment>
<comment type="pathway">
    <text evidence="1">Protein modification; protein lipoylation via endogenous pathway; protein N(6)-(lipoyl)lysine from octanoyl-[acyl-carrier-protein]: step 2/2.</text>
</comment>
<comment type="subcellular location">
    <subcellularLocation>
        <location evidence="1">Cytoplasm</location>
    </subcellularLocation>
</comment>
<comment type="similarity">
    <text evidence="1">Belongs to the radical SAM superfamily. Lipoyl synthase family.</text>
</comment>
<organism>
    <name type="scientific">Bartonella quintana (strain Toulouse)</name>
    <name type="common">Rochalimaea quintana</name>
    <dbReference type="NCBI Taxonomy" id="283165"/>
    <lineage>
        <taxon>Bacteria</taxon>
        <taxon>Pseudomonadati</taxon>
        <taxon>Pseudomonadota</taxon>
        <taxon>Alphaproteobacteria</taxon>
        <taxon>Hyphomicrobiales</taxon>
        <taxon>Bartonellaceae</taxon>
        <taxon>Bartonella</taxon>
    </lineage>
</organism>
<protein>
    <recommendedName>
        <fullName evidence="1">Lipoyl synthase</fullName>
        <ecNumber evidence="1">2.8.1.8</ecNumber>
    </recommendedName>
    <alternativeName>
        <fullName evidence="1">Lip-syn</fullName>
        <shortName evidence="1">LS</shortName>
    </alternativeName>
    <alternativeName>
        <fullName evidence="1">Lipoate synthase</fullName>
    </alternativeName>
    <alternativeName>
        <fullName evidence="1">Lipoic acid synthase</fullName>
    </alternativeName>
    <alternativeName>
        <fullName evidence="1">Sulfur insertion protein LipA</fullName>
    </alternativeName>
</protein>
<feature type="chain" id="PRO_1000012190" description="Lipoyl synthase">
    <location>
        <begin position="1"/>
        <end position="320"/>
    </location>
</feature>
<feature type="domain" description="Radical SAM core" evidence="2">
    <location>
        <begin position="71"/>
        <end position="287"/>
    </location>
</feature>
<feature type="region of interest" description="Disordered" evidence="3">
    <location>
        <begin position="1"/>
        <end position="26"/>
    </location>
</feature>
<feature type="binding site" evidence="1">
    <location>
        <position position="59"/>
    </location>
    <ligand>
        <name>[4Fe-4S] cluster</name>
        <dbReference type="ChEBI" id="CHEBI:49883"/>
        <label>1</label>
    </ligand>
</feature>
<feature type="binding site" evidence="1">
    <location>
        <position position="64"/>
    </location>
    <ligand>
        <name>[4Fe-4S] cluster</name>
        <dbReference type="ChEBI" id="CHEBI:49883"/>
        <label>1</label>
    </ligand>
</feature>
<feature type="binding site" evidence="1">
    <location>
        <position position="70"/>
    </location>
    <ligand>
        <name>[4Fe-4S] cluster</name>
        <dbReference type="ChEBI" id="CHEBI:49883"/>
        <label>1</label>
    </ligand>
</feature>
<feature type="binding site" evidence="1">
    <location>
        <position position="85"/>
    </location>
    <ligand>
        <name>[4Fe-4S] cluster</name>
        <dbReference type="ChEBI" id="CHEBI:49883"/>
        <label>2</label>
        <note>4Fe-4S-S-AdoMet</note>
    </ligand>
</feature>
<feature type="binding site" evidence="1">
    <location>
        <position position="89"/>
    </location>
    <ligand>
        <name>[4Fe-4S] cluster</name>
        <dbReference type="ChEBI" id="CHEBI:49883"/>
        <label>2</label>
        <note>4Fe-4S-S-AdoMet</note>
    </ligand>
</feature>
<feature type="binding site" evidence="1">
    <location>
        <position position="92"/>
    </location>
    <ligand>
        <name>[4Fe-4S] cluster</name>
        <dbReference type="ChEBI" id="CHEBI:49883"/>
        <label>2</label>
        <note>4Fe-4S-S-AdoMet</note>
    </ligand>
</feature>
<feature type="binding site" evidence="1">
    <location>
        <position position="298"/>
    </location>
    <ligand>
        <name>[4Fe-4S] cluster</name>
        <dbReference type="ChEBI" id="CHEBI:49883"/>
        <label>1</label>
    </ligand>
</feature>
<proteinExistence type="inferred from homology"/>
<name>LIPA_BARQU</name>
<evidence type="ECO:0000255" key="1">
    <source>
        <dbReference type="HAMAP-Rule" id="MF_00206"/>
    </source>
</evidence>
<evidence type="ECO:0000255" key="2">
    <source>
        <dbReference type="PROSITE-ProRule" id="PRU01266"/>
    </source>
</evidence>
<evidence type="ECO:0000256" key="3">
    <source>
        <dbReference type="SAM" id="MobiDB-lite"/>
    </source>
</evidence>